<accession>Q8N9Z2</accession>
<accession>Q7Z756</accession>
<comment type="alternative products">
    <event type="alternative splicing"/>
    <isoform>
        <id>Q8N9Z2-1</id>
        <name>1</name>
        <sequence type="displayed"/>
    </isoform>
    <isoform>
        <id>Q8N9Z2-2</id>
        <name>2</name>
        <sequence type="described" ref="VSP_033753"/>
    </isoform>
</comment>
<comment type="sequence caution" evidence="3">
    <conflict type="erroneous initiation">
        <sequence resource="EMBL-CDS" id="AAH13906"/>
    </conflict>
    <text>Truncated N-terminus.</text>
</comment>
<comment type="sequence caution" evidence="3">
    <conflict type="erroneous initiation">
        <sequence resource="EMBL-CDS" id="EAL24398"/>
    </conflict>
    <text>Truncated N-terminus.</text>
</comment>
<sequence>MRRSMKRRRRRRPVAPATAARGGDFRAEDGAGLEAREEKVVYSRSQLSLADSTKALGDAFKLFMPRSTEFMSSDAELWSFLCSLKHQFSPHILRSKDVYGYSSCRALVPDPPGPPTARGQARRPVPRAAARRRRRGARAAAARRRKPRPPPPPPPPPEESCPAKPVAPGPCFGGRTLEEIWRAATPTLTTFPTIRVGSDVWGERSLAAARRRARQVLRVNLEPMVRLRRFPVPRA</sequence>
<protein>
    <recommendedName>
        <fullName>Coiled-coil domain-containing protein 71L</fullName>
    </recommendedName>
</protein>
<proteinExistence type="evidence at protein level"/>
<reference key="1">
    <citation type="journal article" date="2003" name="Nature">
        <title>The DNA sequence of human chromosome 7.</title>
        <authorList>
            <person name="Hillier L.W."/>
            <person name="Fulton R.S."/>
            <person name="Fulton L.A."/>
            <person name="Graves T.A."/>
            <person name="Pepin K.H."/>
            <person name="Wagner-McPherson C."/>
            <person name="Layman D."/>
            <person name="Maas J."/>
            <person name="Jaeger S."/>
            <person name="Walker R."/>
            <person name="Wylie K."/>
            <person name="Sekhon M."/>
            <person name="Becker M.C."/>
            <person name="O'Laughlin M.D."/>
            <person name="Schaller M.E."/>
            <person name="Fewell G.A."/>
            <person name="Delehaunty K.D."/>
            <person name="Miner T.L."/>
            <person name="Nash W.E."/>
            <person name="Cordes M."/>
            <person name="Du H."/>
            <person name="Sun H."/>
            <person name="Edwards J."/>
            <person name="Bradshaw-Cordum H."/>
            <person name="Ali J."/>
            <person name="Andrews S."/>
            <person name="Isak A."/>
            <person name="Vanbrunt A."/>
            <person name="Nguyen C."/>
            <person name="Du F."/>
            <person name="Lamar B."/>
            <person name="Courtney L."/>
            <person name="Kalicki J."/>
            <person name="Ozersky P."/>
            <person name="Bielicki L."/>
            <person name="Scott K."/>
            <person name="Holmes A."/>
            <person name="Harkins R."/>
            <person name="Harris A."/>
            <person name="Strong C.M."/>
            <person name="Hou S."/>
            <person name="Tomlinson C."/>
            <person name="Dauphin-Kohlberg S."/>
            <person name="Kozlowicz-Reilly A."/>
            <person name="Leonard S."/>
            <person name="Rohlfing T."/>
            <person name="Rock S.M."/>
            <person name="Tin-Wollam A.-M."/>
            <person name="Abbott A."/>
            <person name="Minx P."/>
            <person name="Maupin R."/>
            <person name="Strowmatt C."/>
            <person name="Latreille P."/>
            <person name="Miller N."/>
            <person name="Johnson D."/>
            <person name="Murray J."/>
            <person name="Woessner J.P."/>
            <person name="Wendl M.C."/>
            <person name="Yang S.-P."/>
            <person name="Schultz B.R."/>
            <person name="Wallis J.W."/>
            <person name="Spieth J."/>
            <person name="Bieri T.A."/>
            <person name="Nelson J.O."/>
            <person name="Berkowicz N."/>
            <person name="Wohldmann P.E."/>
            <person name="Cook L.L."/>
            <person name="Hickenbotham M.T."/>
            <person name="Eldred J."/>
            <person name="Williams D."/>
            <person name="Bedell J.A."/>
            <person name="Mardis E.R."/>
            <person name="Clifton S.W."/>
            <person name="Chissoe S.L."/>
            <person name="Marra M.A."/>
            <person name="Raymond C."/>
            <person name="Haugen E."/>
            <person name="Gillett W."/>
            <person name="Zhou Y."/>
            <person name="James R."/>
            <person name="Phelps K."/>
            <person name="Iadanoto S."/>
            <person name="Bubb K."/>
            <person name="Simms E."/>
            <person name="Levy R."/>
            <person name="Clendenning J."/>
            <person name="Kaul R."/>
            <person name="Kent W.J."/>
            <person name="Furey T.S."/>
            <person name="Baertsch R.A."/>
            <person name="Brent M.R."/>
            <person name="Keibler E."/>
            <person name="Flicek P."/>
            <person name="Bork P."/>
            <person name="Suyama M."/>
            <person name="Bailey J.A."/>
            <person name="Portnoy M.E."/>
            <person name="Torrents D."/>
            <person name="Chinwalla A.T."/>
            <person name="Gish W.R."/>
            <person name="Eddy S.R."/>
            <person name="McPherson J.D."/>
            <person name="Olson M.V."/>
            <person name="Eichler E.E."/>
            <person name="Green E.D."/>
            <person name="Waterston R.H."/>
            <person name="Wilson R.K."/>
        </authorList>
    </citation>
    <scope>NUCLEOTIDE SEQUENCE [LARGE SCALE GENOMIC DNA]</scope>
</reference>
<reference key="2">
    <citation type="journal article" date="2003" name="Science">
        <title>Human chromosome 7: DNA sequence and biology.</title>
        <authorList>
            <person name="Scherer S.W."/>
            <person name="Cheung J."/>
            <person name="MacDonald J.R."/>
            <person name="Osborne L.R."/>
            <person name="Nakabayashi K."/>
            <person name="Herbrick J.-A."/>
            <person name="Carson A.R."/>
            <person name="Parker-Katiraee L."/>
            <person name="Skaug J."/>
            <person name="Khaja R."/>
            <person name="Zhang J."/>
            <person name="Hudek A.K."/>
            <person name="Li M."/>
            <person name="Haddad M."/>
            <person name="Duggan G.E."/>
            <person name="Fernandez B.A."/>
            <person name="Kanematsu E."/>
            <person name="Gentles S."/>
            <person name="Christopoulos C.C."/>
            <person name="Choufani S."/>
            <person name="Kwasnicka D."/>
            <person name="Zheng X.H."/>
            <person name="Lai Z."/>
            <person name="Nusskern D.R."/>
            <person name="Zhang Q."/>
            <person name="Gu Z."/>
            <person name="Lu F."/>
            <person name="Zeesman S."/>
            <person name="Nowaczyk M.J."/>
            <person name="Teshima I."/>
            <person name="Chitayat D."/>
            <person name="Shuman C."/>
            <person name="Weksberg R."/>
            <person name="Zackai E.H."/>
            <person name="Grebe T.A."/>
            <person name="Cox S.R."/>
            <person name="Kirkpatrick S.J."/>
            <person name="Rahman N."/>
            <person name="Friedman J.M."/>
            <person name="Heng H.H.Q."/>
            <person name="Pelicci P.G."/>
            <person name="Lo-Coco F."/>
            <person name="Belloni E."/>
            <person name="Shaffer L.G."/>
            <person name="Pober B."/>
            <person name="Morton C.C."/>
            <person name="Gusella J.F."/>
            <person name="Bruns G.A.P."/>
            <person name="Korf B.R."/>
            <person name="Quade B.J."/>
            <person name="Ligon A.H."/>
            <person name="Ferguson H."/>
            <person name="Higgins A.W."/>
            <person name="Leach N.T."/>
            <person name="Herrick S.R."/>
            <person name="Lemyre E."/>
            <person name="Farra C.G."/>
            <person name="Kim H.-G."/>
            <person name="Summers A.M."/>
            <person name="Gripp K.W."/>
            <person name="Roberts W."/>
            <person name="Szatmari P."/>
            <person name="Winsor E.J.T."/>
            <person name="Grzeschik K.-H."/>
            <person name="Teebi A."/>
            <person name="Minassian B.A."/>
            <person name="Kere J."/>
            <person name="Armengol L."/>
            <person name="Pujana M.A."/>
            <person name="Estivill X."/>
            <person name="Wilson M.D."/>
            <person name="Koop B.F."/>
            <person name="Tosi S."/>
            <person name="Moore G.E."/>
            <person name="Boright A.P."/>
            <person name="Zlotorynski E."/>
            <person name="Kerem B."/>
            <person name="Kroisel P.M."/>
            <person name="Petek E."/>
            <person name="Oscier D.G."/>
            <person name="Mould S.J."/>
            <person name="Doehner H."/>
            <person name="Doehner K."/>
            <person name="Rommens J.M."/>
            <person name="Vincent J.B."/>
            <person name="Venter J.C."/>
            <person name="Li P.W."/>
            <person name="Mural R.J."/>
            <person name="Adams M.D."/>
            <person name="Tsui L.-C."/>
        </authorList>
    </citation>
    <scope>NUCLEOTIDE SEQUENCE [LARGE SCALE GENOMIC DNA]</scope>
</reference>
<reference key="3">
    <citation type="journal article" date="2004" name="Genome Res.">
        <title>The status, quality, and expansion of the NIH full-length cDNA project: the Mammalian Gene Collection (MGC).</title>
        <authorList>
            <consortium name="The MGC Project Team"/>
        </authorList>
    </citation>
    <scope>NUCLEOTIDE SEQUENCE [LARGE SCALE MRNA] (ISOFORM 2)</scope>
    <source>
        <tissue>Placenta</tissue>
    </source>
</reference>
<reference key="4">
    <citation type="journal article" date="2004" name="Nat. Genet.">
        <title>Complete sequencing and characterization of 21,243 full-length human cDNAs.</title>
        <authorList>
            <person name="Ota T."/>
            <person name="Suzuki Y."/>
            <person name="Nishikawa T."/>
            <person name="Otsuki T."/>
            <person name="Sugiyama T."/>
            <person name="Irie R."/>
            <person name="Wakamatsu A."/>
            <person name="Hayashi K."/>
            <person name="Sato H."/>
            <person name="Nagai K."/>
            <person name="Kimura K."/>
            <person name="Makita H."/>
            <person name="Sekine M."/>
            <person name="Obayashi M."/>
            <person name="Nishi T."/>
            <person name="Shibahara T."/>
            <person name="Tanaka T."/>
            <person name="Ishii S."/>
            <person name="Yamamoto J."/>
            <person name="Saito K."/>
            <person name="Kawai Y."/>
            <person name="Isono Y."/>
            <person name="Nakamura Y."/>
            <person name="Nagahari K."/>
            <person name="Murakami K."/>
            <person name="Yasuda T."/>
            <person name="Iwayanagi T."/>
            <person name="Wagatsuma M."/>
            <person name="Shiratori A."/>
            <person name="Sudo H."/>
            <person name="Hosoiri T."/>
            <person name="Kaku Y."/>
            <person name="Kodaira H."/>
            <person name="Kondo H."/>
            <person name="Sugawara M."/>
            <person name="Takahashi M."/>
            <person name="Kanda K."/>
            <person name="Yokoi T."/>
            <person name="Furuya T."/>
            <person name="Kikkawa E."/>
            <person name="Omura Y."/>
            <person name="Abe K."/>
            <person name="Kamihara K."/>
            <person name="Katsuta N."/>
            <person name="Sato K."/>
            <person name="Tanikawa M."/>
            <person name="Yamazaki M."/>
            <person name="Ninomiya K."/>
            <person name="Ishibashi T."/>
            <person name="Yamashita H."/>
            <person name="Murakawa K."/>
            <person name="Fujimori K."/>
            <person name="Tanai H."/>
            <person name="Kimata M."/>
            <person name="Watanabe M."/>
            <person name="Hiraoka S."/>
            <person name="Chiba Y."/>
            <person name="Ishida S."/>
            <person name="Ono Y."/>
            <person name="Takiguchi S."/>
            <person name="Watanabe S."/>
            <person name="Yosida M."/>
            <person name="Hotuta T."/>
            <person name="Kusano J."/>
            <person name="Kanehori K."/>
            <person name="Takahashi-Fujii A."/>
            <person name="Hara H."/>
            <person name="Tanase T.-O."/>
            <person name="Nomura Y."/>
            <person name="Togiya S."/>
            <person name="Komai F."/>
            <person name="Hara R."/>
            <person name="Takeuchi K."/>
            <person name="Arita M."/>
            <person name="Imose N."/>
            <person name="Musashino K."/>
            <person name="Yuuki H."/>
            <person name="Oshima A."/>
            <person name="Sasaki N."/>
            <person name="Aotsuka S."/>
            <person name="Yoshikawa Y."/>
            <person name="Matsunawa H."/>
            <person name="Ichihara T."/>
            <person name="Shiohata N."/>
            <person name="Sano S."/>
            <person name="Moriya S."/>
            <person name="Momiyama H."/>
            <person name="Satoh N."/>
            <person name="Takami S."/>
            <person name="Terashima Y."/>
            <person name="Suzuki O."/>
            <person name="Nakagawa S."/>
            <person name="Senoh A."/>
            <person name="Mizoguchi H."/>
            <person name="Goto Y."/>
            <person name="Shimizu F."/>
            <person name="Wakebe H."/>
            <person name="Hishigaki H."/>
            <person name="Watanabe T."/>
            <person name="Sugiyama A."/>
            <person name="Takemoto M."/>
            <person name="Kawakami B."/>
            <person name="Yamazaki M."/>
            <person name="Watanabe K."/>
            <person name="Kumagai A."/>
            <person name="Itakura S."/>
            <person name="Fukuzumi Y."/>
            <person name="Fujimori Y."/>
            <person name="Komiyama M."/>
            <person name="Tashiro H."/>
            <person name="Tanigami A."/>
            <person name="Fujiwara T."/>
            <person name="Ono T."/>
            <person name="Yamada K."/>
            <person name="Fujii Y."/>
            <person name="Ozaki K."/>
            <person name="Hirao M."/>
            <person name="Ohmori Y."/>
            <person name="Kawabata A."/>
            <person name="Hikiji T."/>
            <person name="Kobatake N."/>
            <person name="Inagaki H."/>
            <person name="Ikema Y."/>
            <person name="Okamoto S."/>
            <person name="Okitani R."/>
            <person name="Kawakami T."/>
            <person name="Noguchi S."/>
            <person name="Itoh T."/>
            <person name="Shigeta K."/>
            <person name="Senba T."/>
            <person name="Matsumura K."/>
            <person name="Nakajima Y."/>
            <person name="Mizuno T."/>
            <person name="Morinaga M."/>
            <person name="Sasaki M."/>
            <person name="Togashi T."/>
            <person name="Oyama M."/>
            <person name="Hata H."/>
            <person name="Watanabe M."/>
            <person name="Komatsu T."/>
            <person name="Mizushima-Sugano J."/>
            <person name="Satoh T."/>
            <person name="Shirai Y."/>
            <person name="Takahashi Y."/>
            <person name="Nakagawa K."/>
            <person name="Okumura K."/>
            <person name="Nagase T."/>
            <person name="Nomura N."/>
            <person name="Kikuchi H."/>
            <person name="Masuho Y."/>
            <person name="Yamashita R."/>
            <person name="Nakai K."/>
            <person name="Yada T."/>
            <person name="Nakamura Y."/>
            <person name="Ohara O."/>
            <person name="Isogai T."/>
            <person name="Sugano S."/>
        </authorList>
    </citation>
    <scope>NUCLEOTIDE SEQUENCE [LARGE SCALE MRNA] OF 5-235 (ISOFORM 1)</scope>
    <source>
        <tissue>Testis</tissue>
    </source>
</reference>
<reference key="5">
    <citation type="journal article" date="2013" name="J. Proteome Res.">
        <title>Toward a comprehensive characterization of a human cancer cell phosphoproteome.</title>
        <authorList>
            <person name="Zhou H."/>
            <person name="Di Palma S."/>
            <person name="Preisinger C."/>
            <person name="Peng M."/>
            <person name="Polat A.N."/>
            <person name="Heck A.J."/>
            <person name="Mohammed S."/>
        </authorList>
    </citation>
    <scope>PHOSPHORYLATION [LARGE SCALE ANALYSIS] AT SER-52; SER-89; THR-185 AND SER-198</scope>
    <scope>IDENTIFICATION BY MASS SPECTROMETRY [LARGE SCALE ANALYSIS]</scope>
    <source>
        <tissue>Erythroleukemia</tissue>
    </source>
</reference>
<keyword id="KW-0025">Alternative splicing</keyword>
<keyword id="KW-0597">Phosphoprotein</keyword>
<keyword id="KW-1267">Proteomics identification</keyword>
<keyword id="KW-1185">Reference proteome</keyword>
<gene>
    <name type="primary">CCDC71L</name>
    <name type="synonym">C7orf74</name>
</gene>
<organism>
    <name type="scientific">Homo sapiens</name>
    <name type="common">Human</name>
    <dbReference type="NCBI Taxonomy" id="9606"/>
    <lineage>
        <taxon>Eukaryota</taxon>
        <taxon>Metazoa</taxon>
        <taxon>Chordata</taxon>
        <taxon>Craniata</taxon>
        <taxon>Vertebrata</taxon>
        <taxon>Euteleostomi</taxon>
        <taxon>Mammalia</taxon>
        <taxon>Eutheria</taxon>
        <taxon>Euarchontoglires</taxon>
        <taxon>Primates</taxon>
        <taxon>Haplorrhini</taxon>
        <taxon>Catarrhini</taxon>
        <taxon>Hominidae</taxon>
        <taxon>Homo</taxon>
    </lineage>
</organism>
<name>CC71L_HUMAN</name>
<dbReference type="EMBL" id="AC004917">
    <property type="status" value="NOT_ANNOTATED_CDS"/>
    <property type="molecule type" value="Genomic_DNA"/>
</dbReference>
<dbReference type="EMBL" id="CH236947">
    <property type="protein sequence ID" value="EAL24398.1"/>
    <property type="status" value="ALT_INIT"/>
    <property type="molecule type" value="Genomic_DNA"/>
</dbReference>
<dbReference type="EMBL" id="BC013906">
    <property type="protein sequence ID" value="AAH13906.1"/>
    <property type="status" value="ALT_INIT"/>
    <property type="molecule type" value="mRNA"/>
</dbReference>
<dbReference type="EMBL" id="AK093350">
    <property type="protein sequence ID" value="BAC04142.1"/>
    <property type="molecule type" value="mRNA"/>
</dbReference>
<dbReference type="CCDS" id="CCDS55151.1">
    <molecule id="Q8N9Z2-1"/>
</dbReference>
<dbReference type="RefSeq" id="NP_787080.2">
    <molecule id="Q8N9Z2-1"/>
    <property type="nucleotide sequence ID" value="NM_175884.6"/>
</dbReference>
<dbReference type="BioGRID" id="127965">
    <property type="interactions" value="31"/>
</dbReference>
<dbReference type="FunCoup" id="Q8N9Z2">
    <property type="interactions" value="148"/>
</dbReference>
<dbReference type="IntAct" id="Q8N9Z2">
    <property type="interactions" value="13"/>
</dbReference>
<dbReference type="MINT" id="Q8N9Z2"/>
<dbReference type="STRING" id="9606.ENSP00000430897"/>
<dbReference type="iPTMnet" id="Q8N9Z2"/>
<dbReference type="PhosphoSitePlus" id="Q8N9Z2"/>
<dbReference type="BioMuta" id="CCDC71L"/>
<dbReference type="DMDM" id="189041191"/>
<dbReference type="jPOST" id="Q8N9Z2"/>
<dbReference type="MassIVE" id="Q8N9Z2"/>
<dbReference type="PaxDb" id="9606-ENSP00000430897"/>
<dbReference type="PeptideAtlas" id="Q8N9Z2"/>
<dbReference type="ProteomicsDB" id="72613">
    <molecule id="Q8N9Z2-1"/>
</dbReference>
<dbReference type="ProteomicsDB" id="72614">
    <molecule id="Q8N9Z2-2"/>
</dbReference>
<dbReference type="Pumba" id="Q8N9Z2"/>
<dbReference type="Antibodypedia" id="76673">
    <property type="antibodies" value="4 antibodies from 4 providers"/>
</dbReference>
<dbReference type="DNASU" id="168455"/>
<dbReference type="Ensembl" id="ENST00000523505.3">
    <molecule id="Q8N9Z2-1"/>
    <property type="protein sequence ID" value="ENSP00000430897.2"/>
    <property type="gene ID" value="ENSG00000253276.5"/>
</dbReference>
<dbReference type="GeneID" id="168455"/>
<dbReference type="KEGG" id="hsa:168455"/>
<dbReference type="MANE-Select" id="ENST00000523505.3">
    <property type="protein sequence ID" value="ENSP00000430897.2"/>
    <property type="RefSeq nucleotide sequence ID" value="NM_175884.6"/>
    <property type="RefSeq protein sequence ID" value="NP_787080.2"/>
</dbReference>
<dbReference type="UCSC" id="uc003vdt.4">
    <molecule id="Q8N9Z2-1"/>
    <property type="organism name" value="human"/>
</dbReference>
<dbReference type="AGR" id="HGNC:26685"/>
<dbReference type="CTD" id="168455"/>
<dbReference type="DisGeNET" id="168455"/>
<dbReference type="GeneCards" id="CCDC71L"/>
<dbReference type="HGNC" id="HGNC:26685">
    <property type="gene designation" value="CCDC71L"/>
</dbReference>
<dbReference type="HPA" id="ENSG00000253276">
    <property type="expression patterns" value="Low tissue specificity"/>
</dbReference>
<dbReference type="neXtProt" id="NX_Q8N9Z2"/>
<dbReference type="OpenTargets" id="ENSG00000253276"/>
<dbReference type="VEuPathDB" id="HostDB:ENSG00000253276"/>
<dbReference type="eggNOG" id="ENOG502S4D3">
    <property type="taxonomic scope" value="Eukaryota"/>
</dbReference>
<dbReference type="GeneTree" id="ENSGT00940000155306"/>
<dbReference type="HOGENOM" id="CLU_103792_0_0_1"/>
<dbReference type="InParanoid" id="Q8N9Z2"/>
<dbReference type="OMA" id="CSLRHEF"/>
<dbReference type="OrthoDB" id="9939459at2759"/>
<dbReference type="PAN-GO" id="Q8N9Z2">
    <property type="GO annotations" value="0 GO annotations based on evolutionary models"/>
</dbReference>
<dbReference type="PhylomeDB" id="Q8N9Z2"/>
<dbReference type="TreeFam" id="TF336191"/>
<dbReference type="PathwayCommons" id="Q8N9Z2"/>
<dbReference type="SignaLink" id="Q8N9Z2"/>
<dbReference type="BioGRID-ORCS" id="168455">
    <property type="hits" value="30 hits in 1143 CRISPR screens"/>
</dbReference>
<dbReference type="GenomeRNAi" id="168455"/>
<dbReference type="Pharos" id="Q8N9Z2">
    <property type="development level" value="Tdark"/>
</dbReference>
<dbReference type="PRO" id="PR:Q8N9Z2"/>
<dbReference type="Proteomes" id="UP000005640">
    <property type="component" value="Chromosome 7"/>
</dbReference>
<dbReference type="RNAct" id="Q8N9Z2">
    <property type="molecule type" value="protein"/>
</dbReference>
<dbReference type="Bgee" id="ENSG00000253276">
    <property type="expression patterns" value="Expressed in pericardium and 168 other cell types or tissues"/>
</dbReference>
<dbReference type="ExpressionAtlas" id="Q8N9Z2">
    <property type="expression patterns" value="baseline and differential"/>
</dbReference>
<dbReference type="InterPro" id="IPR026695">
    <property type="entry name" value="Ccdc71/71L"/>
</dbReference>
<dbReference type="PANTHER" id="PTHR14484">
    <property type="entry name" value="COILED-COIL DOMAIN-CONTAINING PROTEIN 71"/>
    <property type="match status" value="1"/>
</dbReference>
<dbReference type="PANTHER" id="PTHR14484:SF1">
    <property type="entry name" value="COILED-COIL DOMAIN-CONTAINING PROTEIN 71L"/>
    <property type="match status" value="1"/>
</dbReference>
<dbReference type="Pfam" id="PF15374">
    <property type="entry name" value="CCDC71L"/>
    <property type="match status" value="1"/>
</dbReference>
<feature type="chain" id="PRO_0000334673" description="Coiled-coil domain-containing protein 71L">
    <location>
        <begin position="1"/>
        <end position="235"/>
    </location>
</feature>
<feature type="region of interest" description="Disordered" evidence="1">
    <location>
        <begin position="1"/>
        <end position="30"/>
    </location>
</feature>
<feature type="region of interest" description="Disordered" evidence="1">
    <location>
        <begin position="109"/>
        <end position="167"/>
    </location>
</feature>
<feature type="compositionally biased region" description="Basic residues" evidence="1">
    <location>
        <begin position="1"/>
        <end position="13"/>
    </location>
</feature>
<feature type="compositionally biased region" description="Basic residues" evidence="1">
    <location>
        <begin position="120"/>
        <end position="148"/>
    </location>
</feature>
<feature type="compositionally biased region" description="Pro residues" evidence="1">
    <location>
        <begin position="149"/>
        <end position="159"/>
    </location>
</feature>
<feature type="modified residue" description="Phosphoserine" evidence="4">
    <location>
        <position position="52"/>
    </location>
</feature>
<feature type="modified residue" description="Phosphoserine" evidence="4">
    <location>
        <position position="89"/>
    </location>
</feature>
<feature type="modified residue" description="Phosphothreonine" evidence="4">
    <location>
        <position position="185"/>
    </location>
</feature>
<feature type="modified residue" description="Phosphoserine" evidence="4">
    <location>
        <position position="198"/>
    </location>
</feature>
<feature type="splice variant" id="VSP_033753" description="In isoform 2." evidence="2">
    <original>SSCRALVPDPPGPPTARGQARRPVPRAAARRRRRGARAAAARRRKPRPPPPPPPPPEESCPAKPVAPGPCFGGRTLEEIWRAATPTLTTFPTIRVGSDVWGERSLAAARRRARQVLRVNLEPMVRLRRFPVPRA</original>
    <variation>SPYSPRPGAPAGSARSGQEEAPRSPGGRCPQEEAPAATPTAAAPRGELPGQARGPRALLRGPHLGGDLEGGHPDADHLPHHPRRQRRVGRAQPGGSAAQGAPGPASEPGTHGEAPPLPGAPGMRCGLQGASCRPRPWDRPSARRNEQVSVECLQIRPGPRPPMHFTREEVAGWLSLSRAAARSSWTLGQVCPLLPPVPGLRREGTAGPAGEVPFFLTTD</variation>
    <location>
        <begin position="102"/>
        <end position="235"/>
    </location>
</feature>
<evidence type="ECO:0000256" key="1">
    <source>
        <dbReference type="SAM" id="MobiDB-lite"/>
    </source>
</evidence>
<evidence type="ECO:0000303" key="2">
    <source>
    </source>
</evidence>
<evidence type="ECO:0000305" key="3"/>
<evidence type="ECO:0007744" key="4">
    <source>
    </source>
</evidence>